<organismHost>
    <name type="scientific">Homo sapiens</name>
    <name type="common">Human</name>
    <dbReference type="NCBI Taxonomy" id="9606"/>
</organismHost>
<keyword id="KW-0226">DNA condensation</keyword>
<keyword id="KW-0238">DNA-binding</keyword>
<keyword id="KW-0244">Early protein</keyword>
<keyword id="KW-1035">Host cytoplasm</keyword>
<feature type="chain" id="PRO_0000448200" description="Protein OPG079">
    <location>
        <begin position="1"/>
        <end position="269"/>
    </location>
</feature>
<gene>
    <name type="primary">OPG079</name>
    <name type="ORF">I3L</name>
    <name type="ORF">K3L</name>
</gene>
<proteinExistence type="inferred from homology"/>
<name>PG079_VARV</name>
<accession>P0DOP4</accession>
<accession>P33000</accession>
<evidence type="ECO:0000250" key="1">
    <source>
        <dbReference type="UniProtKB" id="P12923"/>
    </source>
</evidence>
<evidence type="ECO:0000305" key="2"/>
<reference key="1">
    <citation type="journal article" date="1993" name="Nature">
        <title>Potential virulence determinants in terminal regions of variola smallpox virus genome.</title>
        <authorList>
            <person name="Massung R.F."/>
            <person name="Esposito J.J."/>
            <person name="Liu L.I."/>
            <person name="Qi J."/>
            <person name="Utterback T.R."/>
            <person name="Knight J.C."/>
            <person name="Aubin L."/>
            <person name="Yuran T.E."/>
            <person name="Parsons J.M."/>
            <person name="Loparev V.N."/>
            <person name="Selivanov N.A."/>
            <person name="Cavallaro K.F."/>
            <person name="Kerlavage A.R."/>
            <person name="Mahy B.W.J."/>
            <person name="Venter J.C."/>
        </authorList>
    </citation>
    <scope>NUCLEOTIDE SEQUENCE [GENOMIC DNA]</scope>
    <source>
        <strain>Bangladesh-1975</strain>
    </source>
</reference>
<reference key="2">
    <citation type="submission" date="1995-12" db="EMBL/GenBank/DDBJ databases">
        <authorList>
            <person name="Shchelkunov S.N."/>
            <person name="Chizhikov V.E."/>
            <person name="Totmenin A.V."/>
            <person name="Resenchuk S.M."/>
            <person name="Blinov V.M."/>
            <person name="Sandakhchiev L.S."/>
        </authorList>
    </citation>
    <scope>NUCLEOTIDE SEQUENCE [GENOMIC DNA]</scope>
    <source>
        <strain>Garcia-1966</strain>
    </source>
</reference>
<organism>
    <name type="scientific">Variola virus</name>
    <dbReference type="NCBI Taxonomy" id="10255"/>
    <lineage>
        <taxon>Viruses</taxon>
        <taxon>Varidnaviria</taxon>
        <taxon>Bamfordvirae</taxon>
        <taxon>Nucleocytoviricota</taxon>
        <taxon>Pokkesviricetes</taxon>
        <taxon>Chitovirales</taxon>
        <taxon>Poxviridae</taxon>
        <taxon>Chordopoxvirinae</taxon>
        <taxon>Orthopoxvirus</taxon>
    </lineage>
</organism>
<comment type="function">
    <text evidence="1">Plays an essential role in viral DNA replication. Binds to ssDNA with high affinity and localizes to cytoplasmic factories where nascent viral genomes accumulate. May disrupt loops, hairpins and other secondary structures present on ssDNA to reduce and eliminate pausing of viral DNA polymerase at specific sites during elongation.</text>
</comment>
<comment type="subunit">
    <text evidence="1">Homoomultimer (Potential). Interacts with the small subunit of ribonucleotide reductase (By similarity).</text>
</comment>
<comment type="subcellular location">
    <subcellularLocation>
        <location evidence="1">Host cytoplasm</location>
    </subcellularLocation>
    <text evidence="1">Localizes in cytoplasmic virus factories, where it is associated with viral DNA.</text>
</comment>
<comment type="induction">
    <text evidence="1">Expressed in the early phase of the viral replicative cycle.</text>
</comment>
<comment type="miscellaneous">
    <text>This protein is synthesized in the early as well as at the intermediate time of infection.</text>
</comment>
<comment type="similarity">
    <text evidence="2">Belongs to the orthopoxvirus OPG079 family.</text>
</comment>
<dbReference type="EMBL" id="L22579">
    <property type="protein sequence ID" value="AAA60805.1"/>
    <property type="molecule type" value="Genomic_DNA"/>
</dbReference>
<dbReference type="EMBL" id="X76263">
    <property type="protein sequence ID" value="CAA53831.1"/>
    <property type="molecule type" value="Genomic_DNA"/>
</dbReference>
<dbReference type="PIR" id="G72157">
    <property type="entry name" value="G72157"/>
</dbReference>
<dbReference type="PIR" id="T28495">
    <property type="entry name" value="T28495"/>
</dbReference>
<dbReference type="RefSeq" id="NP_042101.1">
    <property type="nucleotide sequence ID" value="NC_001611.1"/>
</dbReference>
<dbReference type="GeneID" id="1486458"/>
<dbReference type="KEGG" id="vg:1486458"/>
<dbReference type="Proteomes" id="UP000119805">
    <property type="component" value="Segment"/>
</dbReference>
<dbReference type="GO" id="GO:0030430">
    <property type="term" value="C:host cell cytoplasm"/>
    <property type="evidence" value="ECO:0007669"/>
    <property type="project" value="UniProtKB-SubCell"/>
</dbReference>
<dbReference type="GO" id="GO:0003697">
    <property type="term" value="F:single-stranded DNA binding"/>
    <property type="evidence" value="ECO:0007669"/>
    <property type="project" value="InterPro"/>
</dbReference>
<dbReference type="GO" id="GO:0030261">
    <property type="term" value="P:chromosome condensation"/>
    <property type="evidence" value="ECO:0007669"/>
    <property type="project" value="UniProtKB-KW"/>
</dbReference>
<dbReference type="InterPro" id="IPR006754">
    <property type="entry name" value="Poxvirus_I3_ssDNA-bd"/>
</dbReference>
<dbReference type="Pfam" id="PF04661">
    <property type="entry name" value="Pox_I3"/>
    <property type="match status" value="1"/>
</dbReference>
<dbReference type="PIRSF" id="PIRSF003767">
    <property type="entry name" value="VAC_I3L"/>
    <property type="match status" value="1"/>
</dbReference>
<protein>
    <recommendedName>
        <fullName>Protein OPG079</fullName>
    </recommendedName>
    <alternativeName>
        <fullName>Protein I3</fullName>
    </alternativeName>
</protein>
<sequence length="269" mass="30049">MSKVIKKRVETSPRPTASSDSLQTCAGVIEYAKSISKSNAKCIEYVTLNASQYANCSSISIKLTDSLSSQMTSTFIMLEGETKLYKNKSKQDRSDGYFLKIKVTAASPMLYQLLEAVYGNIKHKERIPNSLHSLLVETITEKTFKDESIFINKLNGAMVEYVSTGELSILRSIEGELESLSKRERQLAKAIITPVVFYRSGTETKITFALKKLIIDREVVANVIGLSGDSERVSMTENVEEDLARNLGLVDIDDEYDEDSDKEKPIFNV</sequence>